<sequence>MNLTELKQKPITDLLQLAEEMGIENMARSRKQDVIFSLLKKHAKSGEEISGDGVLEILQDGFGFLRSADASYLAGPDDIYVSPSQIRRFNLRTGDTIVGKIRPPKEGERYFALLKVDTINFDRPENAKNKILFENLTPLFPTVRMKMEAGNGSTEDLTGRVIDLCAPIGKGQRGLIVAPPKAGKTIMLQNIAANIARNNPEVHLIVLLIDERPEEVTEMQRTVRGEVVASTFDEPPTRHVQVAEMVIEKAKRLVEHKKDVVILLDSITRLARAYNTVIPSSGKVLTGGVDAHALEKPKRFFGAARNIEEGGSLTIIATALVETGSKMDEVIYEEFKGTGNMELPLDRRIAEKRVFPAININRSGTRREELLTADDELQRMWILRKLLHPMDEVAAIEFLIDKLKTTKTNDEFFLSMKRK</sequence>
<name>RHO_PSEFC</name>
<protein>
    <recommendedName>
        <fullName evidence="1">Transcription termination factor Rho</fullName>
        <ecNumber evidence="1">3.6.4.-</ecNumber>
    </recommendedName>
    <alternativeName>
        <fullName evidence="1">ATP-dependent helicase Rho</fullName>
    </alternativeName>
</protein>
<feature type="chain" id="PRO_0000188973" description="Transcription termination factor Rho">
    <location>
        <begin position="1"/>
        <end position="419"/>
    </location>
</feature>
<feature type="domain" description="Rho RNA-BD" evidence="2">
    <location>
        <begin position="48"/>
        <end position="123"/>
    </location>
</feature>
<feature type="region of interest" description="RNA-binding 1" evidence="1">
    <location>
        <begin position="61"/>
        <end position="66"/>
    </location>
</feature>
<feature type="region of interest" description="RNA-binding 1" evidence="1">
    <location>
        <begin position="78"/>
        <end position="80"/>
    </location>
</feature>
<feature type="region of interest" description="RNA-binding 1" evidence="1">
    <location>
        <begin position="108"/>
        <end position="110"/>
    </location>
</feature>
<feature type="region of interest" description="RNA-binding 2" evidence="1">
    <location>
        <begin position="284"/>
        <end position="288"/>
    </location>
</feature>
<feature type="binding site" evidence="1">
    <location>
        <begin position="169"/>
        <end position="174"/>
    </location>
    <ligand>
        <name>ATP</name>
        <dbReference type="ChEBI" id="CHEBI:30616"/>
    </ligand>
</feature>
<feature type="binding site" evidence="1">
    <location>
        <begin position="181"/>
        <end position="186"/>
    </location>
    <ligand>
        <name>ATP</name>
        <dbReference type="ChEBI" id="CHEBI:30616"/>
    </ligand>
</feature>
<feature type="binding site" evidence="1">
    <location>
        <position position="212"/>
    </location>
    <ligand>
        <name>ATP</name>
        <dbReference type="ChEBI" id="CHEBI:30616"/>
    </ligand>
</feature>
<feature type="site" description="RNA-binding 2" evidence="1">
    <location>
        <position position="326"/>
    </location>
</feature>
<comment type="function">
    <text evidence="1">Facilitates transcription termination by a mechanism that involves Rho binding to the nascent RNA, activation of Rho's RNA-dependent ATPase activity, and release of the mRNA from the DNA template.</text>
</comment>
<comment type="subunit">
    <text evidence="1">Homohexamer. The homohexamer assembles into an open ring structure.</text>
</comment>
<comment type="similarity">
    <text evidence="1">Belongs to the Rho family.</text>
</comment>
<accession>P52155</accession>
<organism>
    <name type="scientific">Pseudomonas fluorescens biotype C</name>
    <dbReference type="NCBI Taxonomy" id="335"/>
    <lineage>
        <taxon>Bacteria</taxon>
        <taxon>Pseudomonadati</taxon>
        <taxon>Pseudomonadota</taxon>
        <taxon>Gammaproteobacteria</taxon>
        <taxon>Pseudomonadales</taxon>
        <taxon>Pseudomonadaceae</taxon>
        <taxon>Pseudomonas</taxon>
    </lineage>
</organism>
<proteinExistence type="inferred from homology"/>
<keyword id="KW-0067">ATP-binding</keyword>
<keyword id="KW-0347">Helicase</keyword>
<keyword id="KW-0378">Hydrolase</keyword>
<keyword id="KW-0547">Nucleotide-binding</keyword>
<keyword id="KW-0694">RNA-binding</keyword>
<keyword id="KW-0804">Transcription</keyword>
<keyword id="KW-0805">Transcription regulation</keyword>
<keyword id="KW-0806">Transcription termination</keyword>
<reference key="1">
    <citation type="journal article" date="1994" name="J. Bacteriol.">
        <title>Phylogenetic analysis of sequences from diverse bacteria with homology to the Escherichia coli rho gene.</title>
        <authorList>
            <person name="Opperman T."/>
            <person name="Richardson J.P."/>
        </authorList>
    </citation>
    <scope>NUCLEOTIDE SEQUENCE [GENOMIC DNA]</scope>
    <source>
        <strain>ATCC 17400 / DSM 50117 / ICPB 2656-18 / NBRC 15833 / NCIMB 10460 / Stanier C-18</strain>
    </source>
</reference>
<dbReference type="EC" id="3.6.4.-" evidence="1"/>
<dbReference type="EMBL" id="L27278">
    <property type="protein sequence ID" value="AAA59209.1"/>
    <property type="molecule type" value="Genomic_DNA"/>
</dbReference>
<dbReference type="SMR" id="P52155"/>
<dbReference type="GO" id="GO:0005829">
    <property type="term" value="C:cytosol"/>
    <property type="evidence" value="ECO:0007669"/>
    <property type="project" value="UniProtKB-ARBA"/>
</dbReference>
<dbReference type="GO" id="GO:0005524">
    <property type="term" value="F:ATP binding"/>
    <property type="evidence" value="ECO:0007669"/>
    <property type="project" value="UniProtKB-UniRule"/>
</dbReference>
<dbReference type="GO" id="GO:0016887">
    <property type="term" value="F:ATP hydrolysis activity"/>
    <property type="evidence" value="ECO:0007669"/>
    <property type="project" value="InterPro"/>
</dbReference>
<dbReference type="GO" id="GO:0008186">
    <property type="term" value="F:ATP-dependent activity, acting on RNA"/>
    <property type="evidence" value="ECO:0007669"/>
    <property type="project" value="InterPro"/>
</dbReference>
<dbReference type="GO" id="GO:0004386">
    <property type="term" value="F:helicase activity"/>
    <property type="evidence" value="ECO:0007669"/>
    <property type="project" value="UniProtKB-UniRule"/>
</dbReference>
<dbReference type="GO" id="GO:0003723">
    <property type="term" value="F:RNA binding"/>
    <property type="evidence" value="ECO:0007669"/>
    <property type="project" value="UniProtKB-UniRule"/>
</dbReference>
<dbReference type="GO" id="GO:0006353">
    <property type="term" value="P:DNA-templated transcription termination"/>
    <property type="evidence" value="ECO:0007669"/>
    <property type="project" value="UniProtKB-UniRule"/>
</dbReference>
<dbReference type="CDD" id="cd04459">
    <property type="entry name" value="Rho_CSD"/>
    <property type="match status" value="1"/>
</dbReference>
<dbReference type="CDD" id="cd01128">
    <property type="entry name" value="rho_factor_C"/>
    <property type="match status" value="1"/>
</dbReference>
<dbReference type="FunFam" id="2.40.50.140:FF:000010">
    <property type="entry name" value="Transcription termination factor Rho"/>
    <property type="match status" value="1"/>
</dbReference>
<dbReference type="FunFam" id="3.40.50.300:FF:000072">
    <property type="entry name" value="Transcription termination factor Rho"/>
    <property type="match status" value="1"/>
</dbReference>
<dbReference type="Gene3D" id="1.10.720.10">
    <property type="match status" value="1"/>
</dbReference>
<dbReference type="Gene3D" id="2.40.50.140">
    <property type="entry name" value="Nucleic acid-binding proteins"/>
    <property type="match status" value="1"/>
</dbReference>
<dbReference type="Gene3D" id="3.40.50.300">
    <property type="entry name" value="P-loop containing nucleotide triphosphate hydrolases"/>
    <property type="match status" value="1"/>
</dbReference>
<dbReference type="HAMAP" id="MF_01884">
    <property type="entry name" value="Rho"/>
    <property type="match status" value="1"/>
</dbReference>
<dbReference type="InterPro" id="IPR003593">
    <property type="entry name" value="AAA+_ATPase"/>
</dbReference>
<dbReference type="InterPro" id="IPR000194">
    <property type="entry name" value="ATPase_F1/V1/A1_a/bsu_nucl-bd"/>
</dbReference>
<dbReference type="InterPro" id="IPR011129">
    <property type="entry name" value="CSD"/>
</dbReference>
<dbReference type="InterPro" id="IPR012340">
    <property type="entry name" value="NA-bd_OB-fold"/>
</dbReference>
<dbReference type="InterPro" id="IPR027417">
    <property type="entry name" value="P-loop_NTPase"/>
</dbReference>
<dbReference type="InterPro" id="IPR011112">
    <property type="entry name" value="Rho-like_N"/>
</dbReference>
<dbReference type="InterPro" id="IPR041703">
    <property type="entry name" value="Rho_factor_ATP-bd"/>
</dbReference>
<dbReference type="InterPro" id="IPR036269">
    <property type="entry name" value="Rho_N_sf"/>
</dbReference>
<dbReference type="InterPro" id="IPR011113">
    <property type="entry name" value="Rho_RNA-bd"/>
</dbReference>
<dbReference type="InterPro" id="IPR004665">
    <property type="entry name" value="Term_rho"/>
</dbReference>
<dbReference type="NCBIfam" id="NF006886">
    <property type="entry name" value="PRK09376.1"/>
    <property type="match status" value="1"/>
</dbReference>
<dbReference type="NCBIfam" id="TIGR00767">
    <property type="entry name" value="rho"/>
    <property type="match status" value="1"/>
</dbReference>
<dbReference type="PANTHER" id="PTHR46425">
    <property type="entry name" value="TRANSCRIPTION TERMINATION FACTOR RHO"/>
    <property type="match status" value="1"/>
</dbReference>
<dbReference type="PANTHER" id="PTHR46425:SF1">
    <property type="entry name" value="TRANSCRIPTION TERMINATION FACTOR RHO"/>
    <property type="match status" value="1"/>
</dbReference>
<dbReference type="Pfam" id="PF00006">
    <property type="entry name" value="ATP-synt_ab"/>
    <property type="match status" value="1"/>
</dbReference>
<dbReference type="Pfam" id="PF07498">
    <property type="entry name" value="Rho_N"/>
    <property type="match status" value="1"/>
</dbReference>
<dbReference type="Pfam" id="PF07497">
    <property type="entry name" value="Rho_RNA_bind"/>
    <property type="match status" value="1"/>
</dbReference>
<dbReference type="SMART" id="SM00382">
    <property type="entry name" value="AAA"/>
    <property type="match status" value="1"/>
</dbReference>
<dbReference type="SMART" id="SM00357">
    <property type="entry name" value="CSP"/>
    <property type="match status" value="1"/>
</dbReference>
<dbReference type="SMART" id="SM00959">
    <property type="entry name" value="Rho_N"/>
    <property type="match status" value="1"/>
</dbReference>
<dbReference type="SUPFAM" id="SSF50249">
    <property type="entry name" value="Nucleic acid-binding proteins"/>
    <property type="match status" value="1"/>
</dbReference>
<dbReference type="SUPFAM" id="SSF52540">
    <property type="entry name" value="P-loop containing nucleoside triphosphate hydrolases"/>
    <property type="match status" value="1"/>
</dbReference>
<dbReference type="SUPFAM" id="SSF68912">
    <property type="entry name" value="Rho N-terminal domain-like"/>
    <property type="match status" value="1"/>
</dbReference>
<dbReference type="PROSITE" id="PS51856">
    <property type="entry name" value="RHO_RNA_BD"/>
    <property type="match status" value="1"/>
</dbReference>
<evidence type="ECO:0000255" key="1">
    <source>
        <dbReference type="HAMAP-Rule" id="MF_01884"/>
    </source>
</evidence>
<evidence type="ECO:0000255" key="2">
    <source>
        <dbReference type="PROSITE-ProRule" id="PRU01203"/>
    </source>
</evidence>
<gene>
    <name evidence="1" type="primary">rho</name>
</gene>